<dbReference type="EC" id="3.4.23.16"/>
<dbReference type="EC" id="2.7.7.49"/>
<dbReference type="EC" id="2.7.7.7"/>
<dbReference type="EC" id="3.1.26.13"/>
<dbReference type="EC" id="3.1.13.2"/>
<dbReference type="EC" id="2.7.7.-" evidence="4"/>
<dbReference type="EC" id="3.1.-.-" evidence="4"/>
<dbReference type="EMBL" id="DQ373065">
    <property type="protein sequence ID" value="ABD19493.1"/>
    <property type="status" value="ALT_SEQ"/>
    <property type="molecule type" value="Genomic_RNA"/>
</dbReference>
<dbReference type="SMR" id="Q1A249"/>
<dbReference type="PRO" id="PR:Q1A249"/>
<dbReference type="Proteomes" id="UP000008436">
    <property type="component" value="Segment"/>
</dbReference>
<dbReference type="GO" id="GO:0043657">
    <property type="term" value="C:host cell"/>
    <property type="evidence" value="ECO:0007669"/>
    <property type="project" value="GOC"/>
</dbReference>
<dbReference type="GO" id="GO:0030430">
    <property type="term" value="C:host cell cytoplasm"/>
    <property type="evidence" value="ECO:0007669"/>
    <property type="project" value="UniProtKB-SubCell"/>
</dbReference>
<dbReference type="GO" id="GO:0042025">
    <property type="term" value="C:host cell nucleus"/>
    <property type="evidence" value="ECO:0007669"/>
    <property type="project" value="UniProtKB-SubCell"/>
</dbReference>
<dbReference type="GO" id="GO:0020002">
    <property type="term" value="C:host cell plasma membrane"/>
    <property type="evidence" value="ECO:0007669"/>
    <property type="project" value="UniProtKB-SubCell"/>
</dbReference>
<dbReference type="GO" id="GO:0016020">
    <property type="term" value="C:membrane"/>
    <property type="evidence" value="ECO:0007669"/>
    <property type="project" value="UniProtKB-KW"/>
</dbReference>
<dbReference type="GO" id="GO:0019013">
    <property type="term" value="C:viral nucleocapsid"/>
    <property type="evidence" value="ECO:0007669"/>
    <property type="project" value="UniProtKB-KW"/>
</dbReference>
<dbReference type="GO" id="GO:0004190">
    <property type="term" value="F:aspartic-type endopeptidase activity"/>
    <property type="evidence" value="ECO:0007669"/>
    <property type="project" value="UniProtKB-KW"/>
</dbReference>
<dbReference type="GO" id="GO:0003677">
    <property type="term" value="F:DNA binding"/>
    <property type="evidence" value="ECO:0007669"/>
    <property type="project" value="UniProtKB-KW"/>
</dbReference>
<dbReference type="GO" id="GO:0003887">
    <property type="term" value="F:DNA-directed DNA polymerase activity"/>
    <property type="evidence" value="ECO:0007669"/>
    <property type="project" value="UniProtKB-KW"/>
</dbReference>
<dbReference type="GO" id="GO:0004533">
    <property type="term" value="F:exoribonuclease H activity"/>
    <property type="evidence" value="ECO:0007669"/>
    <property type="project" value="UniProtKB-EC"/>
</dbReference>
<dbReference type="GO" id="GO:0035613">
    <property type="term" value="F:RNA stem-loop binding"/>
    <property type="evidence" value="ECO:0007669"/>
    <property type="project" value="TreeGrafter"/>
</dbReference>
<dbReference type="GO" id="GO:0003964">
    <property type="term" value="F:RNA-directed DNA polymerase activity"/>
    <property type="evidence" value="ECO:0007669"/>
    <property type="project" value="UniProtKB-KW"/>
</dbReference>
<dbReference type="GO" id="GO:0004523">
    <property type="term" value="F:RNA-DNA hybrid ribonuclease activity"/>
    <property type="evidence" value="ECO:0007669"/>
    <property type="project" value="InterPro"/>
</dbReference>
<dbReference type="GO" id="GO:0005198">
    <property type="term" value="F:structural molecule activity"/>
    <property type="evidence" value="ECO:0007669"/>
    <property type="project" value="InterPro"/>
</dbReference>
<dbReference type="GO" id="GO:0008270">
    <property type="term" value="F:zinc ion binding"/>
    <property type="evidence" value="ECO:0007669"/>
    <property type="project" value="UniProtKB-KW"/>
</dbReference>
<dbReference type="GO" id="GO:0015074">
    <property type="term" value="P:DNA integration"/>
    <property type="evidence" value="ECO:0007669"/>
    <property type="project" value="UniProtKB-KW"/>
</dbReference>
<dbReference type="GO" id="GO:0006310">
    <property type="term" value="P:DNA recombination"/>
    <property type="evidence" value="ECO:0007669"/>
    <property type="project" value="UniProtKB-KW"/>
</dbReference>
<dbReference type="GO" id="GO:0075713">
    <property type="term" value="P:establishment of integrated proviral latency"/>
    <property type="evidence" value="ECO:0007669"/>
    <property type="project" value="UniProtKB-KW"/>
</dbReference>
<dbReference type="GO" id="GO:0006508">
    <property type="term" value="P:proteolysis"/>
    <property type="evidence" value="ECO:0007669"/>
    <property type="project" value="UniProtKB-KW"/>
</dbReference>
<dbReference type="GO" id="GO:0046718">
    <property type="term" value="P:symbiont entry into host cell"/>
    <property type="evidence" value="ECO:0007669"/>
    <property type="project" value="UniProtKB-KW"/>
</dbReference>
<dbReference type="GO" id="GO:0039657">
    <property type="term" value="P:symbiont-mediated suppression of host gene expression"/>
    <property type="evidence" value="ECO:0007669"/>
    <property type="project" value="UniProtKB-KW"/>
</dbReference>
<dbReference type="GO" id="GO:0044826">
    <property type="term" value="P:viral genome integration into host DNA"/>
    <property type="evidence" value="ECO:0007669"/>
    <property type="project" value="UniProtKB-KW"/>
</dbReference>
<dbReference type="GO" id="GO:0075732">
    <property type="term" value="P:viral penetration into host nucleus"/>
    <property type="evidence" value="ECO:0007669"/>
    <property type="project" value="UniProtKB-KW"/>
</dbReference>
<dbReference type="GO" id="GO:0075523">
    <property type="term" value="P:viral translational frameshifting"/>
    <property type="evidence" value="ECO:0007669"/>
    <property type="project" value="UniProtKB-KW"/>
</dbReference>
<dbReference type="CDD" id="cd05482">
    <property type="entry name" value="HIV_retropepsin_like"/>
    <property type="match status" value="1"/>
</dbReference>
<dbReference type="CDD" id="cd01645">
    <property type="entry name" value="RT_Rtv"/>
    <property type="match status" value="1"/>
</dbReference>
<dbReference type="FunFam" id="1.10.1200.30:FF:000001">
    <property type="entry name" value="Gag polyprotein"/>
    <property type="match status" value="1"/>
</dbReference>
<dbReference type="FunFam" id="3.30.70.270:FF:000006">
    <property type="entry name" value="Gag-Pol polyprotein"/>
    <property type="match status" value="1"/>
</dbReference>
<dbReference type="FunFam" id="3.30.420.10:FF:000017">
    <property type="entry name" value="POL polyprotein"/>
    <property type="match status" value="1"/>
</dbReference>
<dbReference type="Gene3D" id="1.10.10.200">
    <property type="match status" value="1"/>
</dbReference>
<dbReference type="Gene3D" id="1.10.1200.30">
    <property type="match status" value="1"/>
</dbReference>
<dbReference type="Gene3D" id="3.30.70.270">
    <property type="match status" value="3"/>
</dbReference>
<dbReference type="Gene3D" id="2.40.70.10">
    <property type="entry name" value="Acid Proteases"/>
    <property type="match status" value="1"/>
</dbReference>
<dbReference type="Gene3D" id="3.10.10.10">
    <property type="entry name" value="HIV Type 1 Reverse Transcriptase, subunit A, domain 1"/>
    <property type="match status" value="1"/>
</dbReference>
<dbReference type="Gene3D" id="1.10.375.10">
    <property type="entry name" value="Human Immunodeficiency Virus Type 1 Capsid Protein"/>
    <property type="match status" value="1"/>
</dbReference>
<dbReference type="Gene3D" id="1.10.150.90">
    <property type="entry name" value="Immunodeficiency lentiviruses, gag gene matrix protein p17"/>
    <property type="match status" value="1"/>
</dbReference>
<dbReference type="Gene3D" id="2.30.30.10">
    <property type="entry name" value="Integrase, C-terminal domain superfamily, retroviral"/>
    <property type="match status" value="1"/>
</dbReference>
<dbReference type="Gene3D" id="3.30.420.10">
    <property type="entry name" value="Ribonuclease H-like superfamily/Ribonuclease H"/>
    <property type="match status" value="2"/>
</dbReference>
<dbReference type="Gene3D" id="1.20.5.760">
    <property type="entry name" value="Single helix bin"/>
    <property type="match status" value="1"/>
</dbReference>
<dbReference type="Gene3D" id="4.10.60.10">
    <property type="entry name" value="Zinc finger, CCHC-type"/>
    <property type="match status" value="1"/>
</dbReference>
<dbReference type="InterPro" id="IPR001969">
    <property type="entry name" value="Aspartic_peptidase_AS"/>
</dbReference>
<dbReference type="InterPro" id="IPR043502">
    <property type="entry name" value="DNA/RNA_pol_sf"/>
</dbReference>
<dbReference type="InterPro" id="IPR045345">
    <property type="entry name" value="Gag_p24_C"/>
</dbReference>
<dbReference type="InterPro" id="IPR017856">
    <property type="entry name" value="Integrase-like_N"/>
</dbReference>
<dbReference type="InterPro" id="IPR036862">
    <property type="entry name" value="Integrase_C_dom_sf_retrovir"/>
</dbReference>
<dbReference type="InterPro" id="IPR001037">
    <property type="entry name" value="Integrase_C_retrovir"/>
</dbReference>
<dbReference type="InterPro" id="IPR001584">
    <property type="entry name" value="Integrase_cat-core"/>
</dbReference>
<dbReference type="InterPro" id="IPR003308">
    <property type="entry name" value="Integrase_Zn-bd_dom_N"/>
</dbReference>
<dbReference type="InterPro" id="IPR000071">
    <property type="entry name" value="Lentvrl_matrix_N"/>
</dbReference>
<dbReference type="InterPro" id="IPR012344">
    <property type="entry name" value="Matrix_HIV/RSV_N"/>
</dbReference>
<dbReference type="InterPro" id="IPR001995">
    <property type="entry name" value="Peptidase_A2_cat"/>
</dbReference>
<dbReference type="InterPro" id="IPR021109">
    <property type="entry name" value="Peptidase_aspartic_dom_sf"/>
</dbReference>
<dbReference type="InterPro" id="IPR034170">
    <property type="entry name" value="Retropepsin-like_cat_dom"/>
</dbReference>
<dbReference type="InterPro" id="IPR018061">
    <property type="entry name" value="Retropepsins"/>
</dbReference>
<dbReference type="InterPro" id="IPR008916">
    <property type="entry name" value="Retrov_capsid_C"/>
</dbReference>
<dbReference type="InterPro" id="IPR008919">
    <property type="entry name" value="Retrov_capsid_N"/>
</dbReference>
<dbReference type="InterPro" id="IPR010999">
    <property type="entry name" value="Retrovr_matrix"/>
</dbReference>
<dbReference type="InterPro" id="IPR043128">
    <property type="entry name" value="Rev_trsase/Diguanyl_cyclase"/>
</dbReference>
<dbReference type="InterPro" id="IPR012337">
    <property type="entry name" value="RNaseH-like_sf"/>
</dbReference>
<dbReference type="InterPro" id="IPR002156">
    <property type="entry name" value="RNaseH_domain"/>
</dbReference>
<dbReference type="InterPro" id="IPR036397">
    <property type="entry name" value="RNaseH_sf"/>
</dbReference>
<dbReference type="InterPro" id="IPR000477">
    <property type="entry name" value="RT_dom"/>
</dbReference>
<dbReference type="InterPro" id="IPR010659">
    <property type="entry name" value="RVT_connect"/>
</dbReference>
<dbReference type="InterPro" id="IPR010661">
    <property type="entry name" value="RVT_thumb"/>
</dbReference>
<dbReference type="InterPro" id="IPR001878">
    <property type="entry name" value="Znf_CCHC"/>
</dbReference>
<dbReference type="InterPro" id="IPR036875">
    <property type="entry name" value="Znf_CCHC_sf"/>
</dbReference>
<dbReference type="PANTHER" id="PTHR41694">
    <property type="entry name" value="ENDOGENOUS RETROVIRUS GROUP K MEMBER POL PROTEIN"/>
    <property type="match status" value="1"/>
</dbReference>
<dbReference type="PANTHER" id="PTHR41694:SF3">
    <property type="entry name" value="RNA-DIRECTED DNA POLYMERASE-RELATED"/>
    <property type="match status" value="1"/>
</dbReference>
<dbReference type="Pfam" id="PF00540">
    <property type="entry name" value="Gag_p17"/>
    <property type="match status" value="1"/>
</dbReference>
<dbReference type="Pfam" id="PF00607">
    <property type="entry name" value="Gag_p24"/>
    <property type="match status" value="1"/>
</dbReference>
<dbReference type="Pfam" id="PF19317">
    <property type="entry name" value="Gag_p24_C"/>
    <property type="match status" value="1"/>
</dbReference>
<dbReference type="Pfam" id="PF00552">
    <property type="entry name" value="IN_DBD_C"/>
    <property type="match status" value="1"/>
</dbReference>
<dbReference type="Pfam" id="PF02022">
    <property type="entry name" value="Integrase_Zn"/>
    <property type="match status" value="1"/>
</dbReference>
<dbReference type="Pfam" id="PF00075">
    <property type="entry name" value="RNase_H"/>
    <property type="match status" value="1"/>
</dbReference>
<dbReference type="Pfam" id="PF00665">
    <property type="entry name" value="rve"/>
    <property type="match status" value="1"/>
</dbReference>
<dbReference type="Pfam" id="PF00077">
    <property type="entry name" value="RVP"/>
    <property type="match status" value="1"/>
</dbReference>
<dbReference type="Pfam" id="PF00078">
    <property type="entry name" value="RVT_1"/>
    <property type="match status" value="1"/>
</dbReference>
<dbReference type="Pfam" id="PF06815">
    <property type="entry name" value="RVT_connect"/>
    <property type="match status" value="1"/>
</dbReference>
<dbReference type="Pfam" id="PF06817">
    <property type="entry name" value="RVT_thumb"/>
    <property type="match status" value="1"/>
</dbReference>
<dbReference type="Pfam" id="PF00098">
    <property type="entry name" value="zf-CCHC"/>
    <property type="match status" value="2"/>
</dbReference>
<dbReference type="PRINTS" id="PR00234">
    <property type="entry name" value="HIV1MATRIX"/>
</dbReference>
<dbReference type="SMART" id="SM00343">
    <property type="entry name" value="ZnF_C2HC"/>
    <property type="match status" value="2"/>
</dbReference>
<dbReference type="SUPFAM" id="SSF50630">
    <property type="entry name" value="Acid proteases"/>
    <property type="match status" value="1"/>
</dbReference>
<dbReference type="SUPFAM" id="SSF50122">
    <property type="entry name" value="DNA-binding domain of retroviral integrase"/>
    <property type="match status" value="1"/>
</dbReference>
<dbReference type="SUPFAM" id="SSF56672">
    <property type="entry name" value="DNA/RNA polymerases"/>
    <property type="match status" value="1"/>
</dbReference>
<dbReference type="SUPFAM" id="SSF46919">
    <property type="entry name" value="N-terminal Zn binding domain of HIV integrase"/>
    <property type="match status" value="1"/>
</dbReference>
<dbReference type="SUPFAM" id="SSF47836">
    <property type="entry name" value="Retroviral matrix proteins"/>
    <property type="match status" value="1"/>
</dbReference>
<dbReference type="SUPFAM" id="SSF47353">
    <property type="entry name" value="Retrovirus capsid dimerization domain-like"/>
    <property type="match status" value="1"/>
</dbReference>
<dbReference type="SUPFAM" id="SSF47943">
    <property type="entry name" value="Retrovirus capsid protein, N-terminal core domain"/>
    <property type="match status" value="1"/>
</dbReference>
<dbReference type="SUPFAM" id="SSF57756">
    <property type="entry name" value="Retrovirus zinc finger-like domains"/>
    <property type="match status" value="1"/>
</dbReference>
<dbReference type="SUPFAM" id="SSF53098">
    <property type="entry name" value="Ribonuclease H-like"/>
    <property type="match status" value="2"/>
</dbReference>
<dbReference type="PROSITE" id="PS50175">
    <property type="entry name" value="ASP_PROT_RETROV"/>
    <property type="match status" value="1"/>
</dbReference>
<dbReference type="PROSITE" id="PS00141">
    <property type="entry name" value="ASP_PROTEASE"/>
    <property type="match status" value="1"/>
</dbReference>
<dbReference type="PROSITE" id="PS50994">
    <property type="entry name" value="INTEGRASE"/>
    <property type="match status" value="1"/>
</dbReference>
<dbReference type="PROSITE" id="PS51027">
    <property type="entry name" value="INTEGRASE_DBD"/>
    <property type="match status" value="1"/>
</dbReference>
<dbReference type="PROSITE" id="PS50879">
    <property type="entry name" value="RNASE_H_1"/>
    <property type="match status" value="1"/>
</dbReference>
<dbReference type="PROSITE" id="PS50878">
    <property type="entry name" value="RT_POL"/>
    <property type="match status" value="1"/>
</dbReference>
<dbReference type="PROSITE" id="PS50158">
    <property type="entry name" value="ZF_CCHC"/>
    <property type="match status" value="2"/>
</dbReference>
<dbReference type="PROSITE" id="PS50876">
    <property type="entry name" value="ZF_INTEGRASE"/>
    <property type="match status" value="1"/>
</dbReference>
<organismHost>
    <name type="scientific">Pan troglodytes</name>
    <name type="common">Chimpanzee</name>
    <dbReference type="NCBI Taxonomy" id="9598"/>
</organismHost>
<name>POL_SIVEK</name>
<evidence type="ECO:0000250" key="1"/>
<evidence type="ECO:0000250" key="2">
    <source>
        <dbReference type="UniProtKB" id="P03366"/>
    </source>
</evidence>
<evidence type="ECO:0000250" key="3">
    <source>
        <dbReference type="UniProtKB" id="P03367"/>
    </source>
</evidence>
<evidence type="ECO:0000250" key="4">
    <source>
        <dbReference type="UniProtKB" id="P04585"/>
    </source>
</evidence>
<evidence type="ECO:0000250" key="5">
    <source>
        <dbReference type="UniProtKB" id="P04591"/>
    </source>
</evidence>
<evidence type="ECO:0000250" key="6">
    <source>
        <dbReference type="UniProtKB" id="P12493"/>
    </source>
</evidence>
<evidence type="ECO:0000250" key="7">
    <source>
        <dbReference type="UniProtKB" id="P12497"/>
    </source>
</evidence>
<evidence type="ECO:0000255" key="8"/>
<evidence type="ECO:0000255" key="9">
    <source>
        <dbReference type="PROSITE-ProRule" id="PRU00047"/>
    </source>
</evidence>
<evidence type="ECO:0000255" key="10">
    <source>
        <dbReference type="PROSITE-ProRule" id="PRU00275"/>
    </source>
</evidence>
<evidence type="ECO:0000255" key="11">
    <source>
        <dbReference type="PROSITE-ProRule" id="PRU00405"/>
    </source>
</evidence>
<evidence type="ECO:0000255" key="12">
    <source>
        <dbReference type="PROSITE-ProRule" id="PRU00408"/>
    </source>
</evidence>
<evidence type="ECO:0000255" key="13">
    <source>
        <dbReference type="PROSITE-ProRule" id="PRU00450"/>
    </source>
</evidence>
<evidence type="ECO:0000255" key="14">
    <source>
        <dbReference type="PROSITE-ProRule" id="PRU00457"/>
    </source>
</evidence>
<evidence type="ECO:0000255" key="15">
    <source>
        <dbReference type="PROSITE-ProRule" id="PRU00506"/>
    </source>
</evidence>
<evidence type="ECO:0000255" key="16">
    <source>
        <dbReference type="PROSITE-ProRule" id="PRU10094"/>
    </source>
</evidence>
<evidence type="ECO:0000256" key="17">
    <source>
        <dbReference type="SAM" id="MobiDB-lite"/>
    </source>
</evidence>
<evidence type="ECO:0000305" key="18"/>
<proteinExistence type="inferred from homology"/>
<accession>Q1A249</accession>
<organism>
    <name type="scientific">Simian immunodeficiency virus (isolate EK505)</name>
    <name type="common">SIV-cpz</name>
    <name type="synonym">Chimpanzee immunodeficiency virus</name>
    <dbReference type="NCBI Taxonomy" id="388912"/>
    <lineage>
        <taxon>Viruses</taxon>
        <taxon>Riboviria</taxon>
        <taxon>Pararnavirae</taxon>
        <taxon>Artverviricota</taxon>
        <taxon>Revtraviricetes</taxon>
        <taxon>Ortervirales</taxon>
        <taxon>Retroviridae</taxon>
        <taxon>Orthoretrovirinae</taxon>
        <taxon>Lentivirus</taxon>
        <taxon>Simian immunodeficiency virus</taxon>
    </lineage>
</organism>
<gene>
    <name type="primary">gag-pol</name>
</gene>
<protein>
    <recommendedName>
        <fullName>Gag-Pol polyprotein</fullName>
    </recommendedName>
    <alternativeName>
        <fullName>Pr160Gag-Pol</fullName>
    </alternativeName>
    <component>
        <recommendedName>
            <fullName>Matrix protein p17</fullName>
            <shortName>MA</shortName>
        </recommendedName>
    </component>
    <component>
        <recommendedName>
            <fullName>Capsid protein p24</fullName>
            <shortName>CA</shortName>
        </recommendedName>
    </component>
    <component>
        <recommendedName>
            <fullName>Spacer peptide p2</fullName>
        </recommendedName>
    </component>
    <component>
        <recommendedName>
            <fullName>Nucleocapsid protein p7</fullName>
            <shortName>NC</shortName>
        </recommendedName>
    </component>
    <component>
        <recommendedName>
            <fullName>p6-pol</fullName>
            <shortName>p6*</shortName>
        </recommendedName>
    </component>
    <component>
        <recommendedName>
            <fullName>Protease</fullName>
            <ecNumber>3.4.23.16</ecNumber>
        </recommendedName>
        <alternativeName>
            <fullName>PR</fullName>
        </alternativeName>
        <alternativeName>
            <fullName>Retropepsin</fullName>
        </alternativeName>
    </component>
    <component>
        <recommendedName>
            <fullName>Reverse transcriptase/ribonuclease H</fullName>
            <ecNumber>2.7.7.49</ecNumber>
            <ecNumber>2.7.7.7</ecNumber>
            <ecNumber>3.1.26.13</ecNumber>
        </recommendedName>
        <alternativeName>
            <fullName>Exoribonuclease H</fullName>
            <ecNumber>3.1.13.2</ecNumber>
        </alternativeName>
        <alternativeName>
            <fullName>p66 RT</fullName>
        </alternativeName>
    </component>
    <component>
        <recommendedName>
            <fullName>p51 RT</fullName>
        </recommendedName>
    </component>
    <component>
        <recommendedName>
            <fullName>p15</fullName>
        </recommendedName>
    </component>
    <component>
        <recommendedName>
            <fullName>Integrase</fullName>
            <shortName>IN</shortName>
            <ecNumber evidence="4">2.7.7.-</ecNumber>
            <ecNumber evidence="4">3.1.-.-</ecNumber>
        </recommendedName>
    </component>
</protein>
<comment type="function">
    <text evidence="1">Gag-Pol polyprotein and Gag polyprotein may regulate their own translation, by the binding genomic RNA in the 5'-UTR. At low concentration, Gag-Pol and Gag would promote translation, whereas at high concentration, the polyproteins encapsidate genomic RNA and then shut off translation (By similarity).</text>
</comment>
<comment type="function">
    <text evidence="1">Matrix protein p17 has two main functions: in infected cell, it targets Gag and Gag-pol polyproteins to the plasma membrane via a multipartite membrane-binding signal, that includes its myristointegration complex. The myristoylation signal and the NLS exert conflicting influences its subcellular localization. The key regulation of these motifs might be phosphorylation of a portion of MA molecules on the C-terminal tyrosine at the time of virus maturation, by virion-associated cellular tyrosine kinase. Implicated in the release from host cell mediated by Vpu (By similarity).</text>
</comment>
<comment type="function">
    <text evidence="1">Capsid protein p24 forms the conical core that encapsulates the genomic RNA-nucleocapsid complex in the virion. The core is constituted by capsid protein hexamer subunits. The core is disassembled soon after virion entry. Interaction with host PPIA/CYPA protects the virus from restriction by host TRIM5-alpha and from an unknown antiviral activity in host cells. This capsid restriction by TRIM5 is one of the factors which restricts SIV to the simian species (By similarity).</text>
</comment>
<comment type="function">
    <text evidence="1">Nucleocapsid protein p7 encapsulates and protects viral dimeric unspliced (genomic) RNA. Binds these RNAs through its zinc fingers. Facilitates rearangement of nucleic acid secondary structure during retrotranscription of genomic RNA. This capability is referred to as nucleic acid chaperone activity (By similarity).</text>
</comment>
<comment type="function">
    <text evidence="10">The aspartyl protease mediates proteolytic cleavages of Gag and Gag-Pol polyproteins during or shortly after the release of the virion from the plasma membrane. Cleavages take place as an ordered, step-wise cascade to yield mature proteins. This process is called maturation. Displays maximal activity during the budding process just prior to particle release from the cell. Also cleaves Nef and Vif, probably concomitantly with viral structural proteins on maturation of virus particles. Hydrolyzes host EIF4GI and PABP1 in order to shut off the capped cellular mRNA translation. The resulting inhibition of cellular protein synthesis serves to ensure maximal viral gene expression and to evade host immune response (By similarity).</text>
</comment>
<comment type="function">
    <text evidence="1">Reverse transcriptase/ribonuclease H (RT) is a multifunctional enzyme that converts the viral dimeric RNA genome into dsDNA in the cytoplasm, shortly after virus entry into the cell. This enzyme displays a DNA polymerase activity that can copy either DNA or RNA templates, and a ribonuclease H (RNase H) activity that cleaves the RNA strand of RNA-DNA heteroduplexes in a partially processive 3' to 5' endonucleasic mode. Conversion of viral genomic RNA into dsDNA requires many steps. A tRNA binds to the primer-binding site (PBS) situated at the 5'-end of the viral RNA. RT uses the 3' end of the tRNA primer to perform a short round of RNA-dependent minus-strand DNA synthesis. The reading proceeds through the U5 region and ends after the repeated (R) region which is present at both ends of viral RNA. The portion of the RNA-DNA heteroduplex is digested by the RNase H, resulting in a ssDNA product attached to the tRNA primer. This ssDNA/tRNA hybridizes with the identical R region situated at the 3' end of viral RNA. This template exchange, known as minus-strand DNA strong stop transfer, can be either intra- or intermolecular. RT uses the 3' end of this newly synthesized short ssDNA to perform the RNA-dependent minus-strand DNA synthesis of the whole template. RNase H digests the RNA template except for two polypurine tracts (PPTs) situated at the 5'-end and near the center of the genome. It is not clear if both polymerase and RNase H activities are simultaneous. RNase H can probably proceed both in a polymerase-dependent (RNA cut into small fragments by the same RT performing DNA synthesis) and a polymerase-independent mode (cleavage of remaining RNA fragments by free RTs). Secondly, RT performs DNA-directed plus-strand DNA synthesis using the PPTs that have not been removed by RNase H as primers. PPTs and tRNA primers are then removed by RNase H. The 3' and 5' ssDNA PBS regions hybridize to form a circular dsDNA intermediate. Strand displacement synthesis by RT to the PBS and PPT ends produces a blunt ended, linear dsDNA copy of the viral genome that includes long terminal repeats (LTRs) at both ends (By similarity).</text>
</comment>
<comment type="function">
    <text evidence="1">Integrase catalyzes viral DNA integration into the host chromosome, by performing a series of DNA cutting and joining reactions. This enzyme activity takes place after virion entry into a cell and reverse transcription of the RNA genome in dsDNA. The first step in the integration process is 3' processing. This step requires a complex comprising the viral genome, matrix protein, Vpr and integrase. This complex is called the pre-integration complex (PIC). The integrase protein removes 2 nucleotides from each 3' end of the viral DNA, leaving recessed CA OH's at the 3' ends. In the second step, the PIC enters cell nucleus. This process is mediated through integrase and Vpr proteins, and allows the virus to infect a non dividing cell. This ability to enter the nucleus is specific of lentiviruses, other retroviruses cannot and rely on cell division to access cell chromosomes. In the third step, termed strand transfer, the integrase protein joins the previously processed 3' ends to the 5' ends of strands of target cellular DNA at the site of integration. The 5'-ends are produced by integrase-catalyzed staggered cuts, 5 bp apart. A Y-shaped, gapped, recombination intermediate results, with the 5'-ends of the viral DNA strands and the 3' ends of target DNA strands remaining unjoined, flanking a gap of 5 bp. The last step is viral DNA integration into host chromosome. This involves host DNA repair synthesis in which the 5 bp gaps between the unjoined strands are filled in and then ligated. Since this process occurs at both cuts flanking the SIV genome, a 5 bp duplication of host DNA is produced at the ends of SIV integration. Alternatively, Integrase may catalyze the excision of viral DNA just after strand transfer, this is termed disintegration (By similarity).</text>
</comment>
<comment type="catalytic activity">
    <reaction evidence="10">
        <text>Specific for a P1 residue that is hydrophobic, and P1' variable, but often Pro.</text>
        <dbReference type="EC" id="3.4.23.16"/>
    </reaction>
</comment>
<comment type="catalytic activity">
    <reaction>
        <text>Endohydrolysis of RNA in RNA/DNA hybrids. Three different cleavage modes: 1. sequence-specific internal cleavage of RNA. Human immunodeficiency virus type 1 and Moloney murine leukemia virus enzymes prefer to cleave the RNA strand one nucleotide away from the RNA-DNA junction. 2. RNA 5'-end directed cleavage 13-19 nucleotides from the RNA end. 3. DNA 3'-end directed cleavage 15-20 nucleotides away from the primer terminus.</text>
        <dbReference type="EC" id="3.1.26.13"/>
    </reaction>
</comment>
<comment type="catalytic activity">
    <reaction>
        <text>3'-end directed exonucleolytic cleavage of viral RNA-DNA hybrid.</text>
        <dbReference type="EC" id="3.1.13.2"/>
    </reaction>
</comment>
<comment type="catalytic activity">
    <reaction evidence="11">
        <text>DNA(n) + a 2'-deoxyribonucleoside 5'-triphosphate = DNA(n+1) + diphosphate</text>
        <dbReference type="Rhea" id="RHEA:22508"/>
        <dbReference type="Rhea" id="RHEA-COMP:17339"/>
        <dbReference type="Rhea" id="RHEA-COMP:17340"/>
        <dbReference type="ChEBI" id="CHEBI:33019"/>
        <dbReference type="ChEBI" id="CHEBI:61560"/>
        <dbReference type="ChEBI" id="CHEBI:173112"/>
        <dbReference type="EC" id="2.7.7.49"/>
    </reaction>
</comment>
<comment type="catalytic activity">
    <reaction evidence="11">
        <text>DNA(n) + a 2'-deoxyribonucleoside 5'-triphosphate = DNA(n+1) + diphosphate</text>
        <dbReference type="Rhea" id="RHEA:22508"/>
        <dbReference type="Rhea" id="RHEA-COMP:17339"/>
        <dbReference type="Rhea" id="RHEA-COMP:17340"/>
        <dbReference type="ChEBI" id="CHEBI:33019"/>
        <dbReference type="ChEBI" id="CHEBI:61560"/>
        <dbReference type="ChEBI" id="CHEBI:173112"/>
        <dbReference type="EC" id="2.7.7.7"/>
    </reaction>
</comment>
<comment type="cofactor">
    <cofactor evidence="1">
        <name>Mg(2+)</name>
        <dbReference type="ChEBI" id="CHEBI:18420"/>
    </cofactor>
    <text evidence="1">Binds 2 magnesium ions for reverse transcriptase polymerase activity.</text>
</comment>
<comment type="cofactor">
    <cofactor evidence="1">
        <name>Mg(2+)</name>
        <dbReference type="ChEBI" id="CHEBI:18420"/>
    </cofactor>
    <text evidence="1">Binds 2 magnesium ions for ribonuclease H (RNase H) activity. Substrate-binding is a precondition for magnesium binding.</text>
</comment>
<comment type="cofactor">
    <cofactor evidence="1">
        <name>Mg(2+)</name>
        <dbReference type="ChEBI" id="CHEBI:18420"/>
    </cofactor>
    <text evidence="1">Magnesium ions are required for integrase activity. Binds at least 1, maybe 2 magnesium ions.</text>
</comment>
<comment type="activity regulation">
    <text>The viral protease is inhibited by many synthetic protease inhibitors (PIs), such as amprenavir, atazanavir, indinavir, loprinavir, nelfinavir, ritonavir and saquinavir. RT can be inhibited either by nucleoside RT inhibitors (NRTIs) or by non nucleoside RT inhibitors (NNRTIs). NRTIs act as chain terminators, whereas NNRTIs inhibit DNA polymerization by binding a small hydrophobic pocket near the RT active site and inducing an allosteric change in this region. Classical NRTIs are abacavir, adefovir (PMEA), didanosine (ddI), lamivudine (3TC), stavudine (d4T), tenofovir (PMPA), zalcitabine (ddC), and zidovudine (AZT). Classical NNRTIs are atevirdine (BHAP U-87201E), delavirdine, efavirenz (DMP-266), emivirine (I-EBU), and nevirapine (BI-RG-587). The tritherapies used as a basic effective treatment of AIDS associate two NRTIs and one NNRTI. Use of protease inhibitors in tritherapy regimens permit more ambitious therapeutic strategies.</text>
</comment>
<comment type="subunit">
    <molecule>Matrix protein p17</molecule>
    <text evidence="5 6">Homotrimer. Interacts with gp41 (via C-terminus).</text>
</comment>
<comment type="subunit">
    <molecule>Protease</molecule>
    <text evidence="4 7">Homodimer. The active site consists of two apposed aspartic acid residues.</text>
</comment>
<comment type="subunit">
    <molecule>Reverse transcriptase/ribonuclease H</molecule>
    <text evidence="2">Heterodimer of p66 RT and p51 RT (RT p66/p51). Heterodimerization of RT is essential for DNA polymerase activity. Despite the sequence identities, p66 RT and p51 RT have distinct folding.</text>
</comment>
<comment type="subunit">
    <molecule>Integrase</molecule>
    <text evidence="3">Homotetramer; may further associate as a homohexadecamer (By similarity).</text>
</comment>
<comment type="subcellular location">
    <molecule>Matrix protein p17</molecule>
    <subcellularLocation>
        <location evidence="18">Virion</location>
    </subcellularLocation>
    <subcellularLocation>
        <location evidence="1">Host nucleus</location>
    </subcellularLocation>
    <subcellularLocation>
        <location evidence="1">Host cytoplasm</location>
    </subcellularLocation>
    <subcellularLocation>
        <location evidence="18">Host cell membrane</location>
        <topology evidence="18">Lipid-anchor</topology>
    </subcellularLocation>
    <text evidence="1">Following virus entry, the nuclear localization signal (NLS) of the matrix protein participates with Vpr to the nuclear localization of the viral genome. During virus production, the nuclear export activity of the matrix protein counteracts the NLS to maintain the Gag and Gag-Pol polyproteins in the cytoplasm, thereby directing unspliced RNA to the plasma membrane (By similarity).</text>
</comment>
<comment type="subcellular location">
    <molecule>Capsid protein p24</molecule>
    <subcellularLocation>
        <location evidence="18">Virion</location>
    </subcellularLocation>
</comment>
<comment type="subcellular location">
    <molecule>Nucleocapsid protein p7</molecule>
    <subcellularLocation>
        <location evidence="18">Virion</location>
    </subcellularLocation>
</comment>
<comment type="subcellular location">
    <molecule>Reverse transcriptase/ribonuclease H</molecule>
    <subcellularLocation>
        <location evidence="18">Virion</location>
    </subcellularLocation>
</comment>
<comment type="subcellular location">
    <molecule>Integrase</molecule>
    <subcellularLocation>
        <location evidence="18">Virion</location>
    </subcellularLocation>
    <subcellularLocation>
        <location evidence="18">Host nucleus</location>
    </subcellularLocation>
    <subcellularLocation>
        <location evidence="18">Host cytoplasm</location>
    </subcellularLocation>
    <text evidence="18">Nuclear at initial phase, cytoplasmic at assembly.</text>
</comment>
<comment type="alternative products">
    <event type="ribosomal frameshifting"/>
    <isoform>
        <id>Q1A249-1</id>
        <name>Gag-Pol polyprotein</name>
        <sequence type="displayed"/>
    </isoform>
    <isoform>
        <id>Q1A250-1</id>
        <name>Gag polyprotein</name>
        <sequence type="external"/>
    </isoform>
    <text>Translation results in the formation of the Gag polyprotein most of the time. Ribosomal frameshifting at the gag-pol genes boundary occurs at low frequency and produces the Gag-Pol polyprotein. This strategy of translation probably allows the virus to modulate the quantity of each viral protein. Maintenance of a correct Gag to Gag-Pol ratio is essential for RNA dimerization and viral infectivity.</text>
</comment>
<comment type="domain">
    <text evidence="1">The p66 RT is structured in five subdomains: finger, palm, thumb, connection and RNase H. Within the palm subdomain, the 'primer grip' region is thought to be involved in the positioning of the primer terminus for accommodating the incoming nucleotide. The RNase H domain stabilizes the association of RT with primer-template (By similarity).</text>
</comment>
<comment type="domain">
    <text evidence="1">The tryptophan repeat motif is involved in RT p66/p51 dimerization.</text>
</comment>
<comment type="PTM">
    <text evidence="11">Specific enzymatic cleavages by the viral protease yield mature proteins. The protease is released by autocatalytic cleavage. The polyprotein is cleaved during and after budding, this process is termed maturation. Proteolytic cleavage of p66 RT removes the RNase H domain to yield the p51 RT subunit.</text>
</comment>
<comment type="PTM">
    <text>Capsid protein p24 is phosphorylated.</text>
</comment>
<comment type="miscellaneous">
    <text>The reverse transcriptase is an error-prone enzyme that lacks a proof-reading function. High mutations rate is a direct consequence of this characteristic. RT also displays frequent template switching leading to high recombination rate. Recombination mostly occurs between homologous regions of the two copackaged RNA genomes. If these two RNA molecules derive from different viral strains, reverse transcription will give rise to highly recombinated proviral DNAs.</text>
</comment>
<comment type="miscellaneous">
    <molecule>Isoform Gag-Pol polyprotein</molecule>
    <text>Produced by -1 ribosomal frameshifting.</text>
</comment>
<feature type="initiator methionine" description="Removed; by host" evidence="1">
    <location>
        <position position="1"/>
    </location>
</feature>
<feature type="chain" id="PRO_0000261302" description="Gag-Pol polyprotein">
    <location>
        <begin position="2"/>
        <end position="1448"/>
    </location>
</feature>
<feature type="chain" id="PRO_0000249374" description="Matrix protein p17" evidence="1">
    <location>
        <begin position="2"/>
        <end position="135"/>
    </location>
</feature>
<feature type="chain" id="PRO_0000249375" description="Capsid protein p24" evidence="1">
    <location>
        <begin position="136"/>
        <end position="366"/>
    </location>
</feature>
<feature type="peptide" id="PRO_0000249376" description="Spacer peptide p2" evidence="1">
    <location>
        <begin position="367"/>
        <end position="380"/>
    </location>
</feature>
<feature type="chain" id="PRO_0000249377" description="Nucleocapsid protein p7" evidence="1">
    <location>
        <begin position="381"/>
        <end position="435"/>
    </location>
</feature>
<feature type="chain" id="PRO_0000249379" description="p6-pol" evidence="8">
    <location>
        <begin position="436"/>
        <end position="497"/>
    </location>
</feature>
<feature type="chain" id="PRO_0000249380" description="Protease" evidence="1">
    <location>
        <begin position="498"/>
        <end position="596"/>
    </location>
</feature>
<feature type="chain" id="PRO_0000249381" description="Reverse transcriptase/ribonuclease H" evidence="1">
    <location>
        <begin position="597"/>
        <end position="1156"/>
    </location>
</feature>
<feature type="chain" id="PRO_0000249382" description="p51 RT" evidence="1">
    <location>
        <begin position="597"/>
        <end position="1036"/>
    </location>
</feature>
<feature type="chain" id="PRO_0000249383" description="p15" evidence="1">
    <location>
        <begin position="1037"/>
        <end position="1156"/>
    </location>
</feature>
<feature type="chain" id="PRO_0000249384" description="Integrase" evidence="1">
    <location>
        <begin position="1157"/>
        <end position="1448"/>
    </location>
</feature>
<feature type="domain" description="Peptidase A2" evidence="10">
    <location>
        <begin position="517"/>
        <end position="586"/>
    </location>
</feature>
<feature type="domain" description="Reverse transcriptase" evidence="11">
    <location>
        <begin position="640"/>
        <end position="830"/>
    </location>
</feature>
<feature type="domain" description="RNase H type-1" evidence="12">
    <location>
        <begin position="1030"/>
        <end position="1153"/>
    </location>
</feature>
<feature type="domain" description="Integrase catalytic" evidence="14">
    <location>
        <begin position="1210"/>
        <end position="1360"/>
    </location>
</feature>
<feature type="zinc finger region" description="CCHC-type 1" evidence="9">
    <location>
        <begin position="393"/>
        <end position="410"/>
    </location>
</feature>
<feature type="zinc finger region" description="CCHC-type 2" evidence="9">
    <location>
        <begin position="414"/>
        <end position="431"/>
    </location>
</feature>
<feature type="zinc finger region" description="Integrase-type" evidence="13">
    <location>
        <begin position="1159"/>
        <end position="1200"/>
    </location>
</feature>
<feature type="DNA-binding region" description="Integrase-type" evidence="15">
    <location>
        <begin position="1379"/>
        <end position="1426"/>
    </location>
</feature>
<feature type="region of interest" description="Disordered" evidence="17">
    <location>
        <begin position="107"/>
        <end position="129"/>
    </location>
</feature>
<feature type="region of interest" description="Disordered" evidence="17">
    <location>
        <begin position="446"/>
        <end position="490"/>
    </location>
</feature>
<feature type="region of interest" description="RT 'primer grip'" evidence="1">
    <location>
        <begin position="823"/>
        <end position="831"/>
    </location>
</feature>
<feature type="short sequence motif" description="Nuclear export signal" evidence="1">
    <location>
        <begin position="16"/>
        <end position="22"/>
    </location>
</feature>
<feature type="short sequence motif" description="Nuclear localization signal" evidence="1">
    <location>
        <begin position="26"/>
        <end position="32"/>
    </location>
</feature>
<feature type="short sequence motif" description="Tryptophan repeat motif" evidence="1">
    <location>
        <begin position="994"/>
        <end position="1010"/>
    </location>
</feature>
<feature type="compositionally biased region" description="Basic and acidic residues" evidence="17">
    <location>
        <begin position="107"/>
        <end position="116"/>
    </location>
</feature>
<feature type="compositionally biased region" description="Low complexity" evidence="17">
    <location>
        <begin position="118"/>
        <end position="128"/>
    </location>
</feature>
<feature type="compositionally biased region" description="Basic and acidic residues" evidence="17">
    <location>
        <begin position="446"/>
        <end position="460"/>
    </location>
</feature>
<feature type="compositionally biased region" description="Basic and acidic residues" evidence="17">
    <location>
        <begin position="473"/>
        <end position="490"/>
    </location>
</feature>
<feature type="active site" description="For protease activity; shared with dimeric partner" evidence="16">
    <location>
        <position position="522"/>
    </location>
</feature>
<feature type="binding site" evidence="1">
    <location>
        <position position="706"/>
    </location>
    <ligand>
        <name>Mg(2+)</name>
        <dbReference type="ChEBI" id="CHEBI:18420"/>
        <label>1</label>
        <note>catalytic; for reverse transcriptase activity</note>
    </ligand>
</feature>
<feature type="binding site" evidence="1">
    <location>
        <position position="781"/>
    </location>
    <ligand>
        <name>Mg(2+)</name>
        <dbReference type="ChEBI" id="CHEBI:18420"/>
        <label>1</label>
        <note>catalytic; for reverse transcriptase activity</note>
    </ligand>
</feature>
<feature type="binding site" evidence="1">
    <location>
        <position position="782"/>
    </location>
    <ligand>
        <name>Mg(2+)</name>
        <dbReference type="ChEBI" id="CHEBI:18420"/>
        <label>1</label>
        <note>catalytic; for reverse transcriptase activity</note>
    </ligand>
</feature>
<feature type="binding site" evidence="1">
    <location>
        <position position="1039"/>
    </location>
    <ligand>
        <name>Mg(2+)</name>
        <dbReference type="ChEBI" id="CHEBI:18420"/>
        <label>2</label>
        <note>catalytic; for RNase H activity</note>
    </ligand>
</feature>
<feature type="binding site" evidence="1">
    <location>
        <position position="1074"/>
    </location>
    <ligand>
        <name>Mg(2+)</name>
        <dbReference type="ChEBI" id="CHEBI:18420"/>
        <label>2</label>
        <note>catalytic; for RNase H activity</note>
    </ligand>
</feature>
<feature type="binding site" evidence="1">
    <location>
        <position position="1094"/>
    </location>
    <ligand>
        <name>Mg(2+)</name>
        <dbReference type="ChEBI" id="CHEBI:18420"/>
        <label>2</label>
        <note>catalytic; for RNase H activity</note>
    </ligand>
</feature>
<feature type="binding site" evidence="1">
    <location>
        <position position="1145"/>
    </location>
    <ligand>
        <name>Mg(2+)</name>
        <dbReference type="ChEBI" id="CHEBI:18420"/>
        <label>2</label>
        <note>catalytic; for RNase H activity</note>
    </ligand>
</feature>
<feature type="binding site" evidence="13">
    <location>
        <position position="1168"/>
    </location>
    <ligand>
        <name>Zn(2+)</name>
        <dbReference type="ChEBI" id="CHEBI:29105"/>
    </ligand>
</feature>
<feature type="binding site" evidence="13">
    <location>
        <position position="1172"/>
    </location>
    <ligand>
        <name>Zn(2+)</name>
        <dbReference type="ChEBI" id="CHEBI:29105"/>
    </ligand>
</feature>
<feature type="binding site" evidence="13">
    <location>
        <position position="1196"/>
    </location>
    <ligand>
        <name>Zn(2+)</name>
        <dbReference type="ChEBI" id="CHEBI:29105"/>
    </ligand>
</feature>
<feature type="binding site" evidence="13">
    <location>
        <position position="1199"/>
    </location>
    <ligand>
        <name>Zn(2+)</name>
        <dbReference type="ChEBI" id="CHEBI:29105"/>
    </ligand>
</feature>
<feature type="binding site" evidence="1">
    <location>
        <position position="1220"/>
    </location>
    <ligand>
        <name>Mg(2+)</name>
        <dbReference type="ChEBI" id="CHEBI:18420"/>
        <label>3</label>
        <note>catalytic; for integrase activity</note>
    </ligand>
</feature>
<feature type="binding site" evidence="1">
    <location>
        <position position="1272"/>
    </location>
    <ligand>
        <name>Mg(2+)</name>
        <dbReference type="ChEBI" id="CHEBI:18420"/>
        <label>3</label>
        <note>catalytic; for integrase activity</note>
    </ligand>
</feature>
<feature type="site" description="Cleavage; by viral protease" evidence="1">
    <location>
        <begin position="135"/>
        <end position="136"/>
    </location>
</feature>
<feature type="site" description="Cis/trans isomerization of proline peptide bond; by human PPIA/CYPA" evidence="1">
    <location>
        <begin position="224"/>
        <end position="225"/>
    </location>
</feature>
<feature type="site" description="Cleavage; by viral protease" evidence="1">
    <location>
        <begin position="366"/>
        <end position="367"/>
    </location>
</feature>
<feature type="site" description="Cleavage; by viral protease" evidence="1">
    <location>
        <begin position="380"/>
        <end position="381"/>
    </location>
</feature>
<feature type="site" description="Cleavage; by viral protease" evidence="1">
    <location>
        <begin position="435"/>
        <end position="436"/>
    </location>
</feature>
<feature type="site" description="Cleavage; by viral protease" evidence="1">
    <location>
        <begin position="497"/>
        <end position="498"/>
    </location>
</feature>
<feature type="site" description="Cleavage; by viral protease" evidence="1">
    <location>
        <begin position="596"/>
        <end position="597"/>
    </location>
</feature>
<feature type="site" description="Essential for RT p66/p51 heterodimerization" evidence="1">
    <location>
        <position position="997"/>
    </location>
</feature>
<feature type="site" description="Essential for RT p66/p51 heterodimerization" evidence="1">
    <location>
        <position position="1010"/>
    </location>
</feature>
<feature type="site" description="Cleavage; by viral protease" evidence="1">
    <location>
        <begin position="1036"/>
        <end position="1037"/>
    </location>
</feature>
<feature type="site" description="Cleavage; by viral protease" evidence="1">
    <location>
        <begin position="1156"/>
        <end position="1157"/>
    </location>
</feature>
<feature type="modified residue" description="Phosphotyrosine; by host" evidence="1">
    <location>
        <position position="135"/>
    </location>
</feature>
<feature type="lipid moiety-binding region" description="N-myristoyl glycine; by host" evidence="1">
    <location>
        <position position="2"/>
    </location>
</feature>
<reference key="1">
    <citation type="journal article" date="2006" name="Science">
        <title>Chimpanzee reservoirs of pandemic and nonpandemic HIV-1.</title>
        <authorList>
            <person name="Keele B.F."/>
            <person name="Van Heuverswyn F."/>
            <person name="Li Y."/>
            <person name="Bailes E."/>
            <person name="Takehisa J."/>
            <person name="Santiago M.L."/>
            <person name="Bibollet-Ruche F."/>
            <person name="Chen Y."/>
            <person name="Wain L.V."/>
            <person name="Liegeois F."/>
            <person name="Loul S."/>
            <person name="Ngole E.M."/>
            <person name="Bienvenue Y."/>
            <person name="Delaporte E."/>
            <person name="Brookfield J.F."/>
            <person name="Sharp P.M."/>
            <person name="Shaw G.M."/>
            <person name="Peeters M."/>
            <person name="Hahn B.H."/>
        </authorList>
    </citation>
    <scope>NUCLEOTIDE SEQUENCE [GENOMIC RNA]</scope>
</reference>
<keyword id="KW-0064">Aspartyl protease</keyword>
<keyword id="KW-0167">Capsid protein</keyword>
<keyword id="KW-0229">DNA integration</keyword>
<keyword id="KW-0233">DNA recombination</keyword>
<keyword id="KW-0238">DNA-binding</keyword>
<keyword id="KW-0239">DNA-directed DNA polymerase</keyword>
<keyword id="KW-0255">Endonuclease</keyword>
<keyword id="KW-1262">Eukaryotic host gene expression shutoff by virus</keyword>
<keyword id="KW-1193">Eukaryotic host translation shutoff by virus</keyword>
<keyword id="KW-1032">Host cell membrane</keyword>
<keyword id="KW-1035">Host cytoplasm</keyword>
<keyword id="KW-1190">Host gene expression shutoff by virus</keyword>
<keyword id="KW-1043">Host membrane</keyword>
<keyword id="KW-1048">Host nucleus</keyword>
<keyword id="KW-0945">Host-virus interaction</keyword>
<keyword id="KW-0378">Hydrolase</keyword>
<keyword id="KW-0449">Lipoprotein</keyword>
<keyword id="KW-0460">Magnesium</keyword>
<keyword id="KW-0472">Membrane</keyword>
<keyword id="KW-0479">Metal-binding</keyword>
<keyword id="KW-0511">Multifunctional enzyme</keyword>
<keyword id="KW-0519">Myristate</keyword>
<keyword id="KW-0540">Nuclease</keyword>
<keyword id="KW-0548">Nucleotidyltransferase</keyword>
<keyword id="KW-0597">Phosphoprotein</keyword>
<keyword id="KW-0645">Protease</keyword>
<keyword id="KW-1185">Reference proteome</keyword>
<keyword id="KW-0677">Repeat</keyword>
<keyword id="KW-0688">Ribosomal frameshifting</keyword>
<keyword id="KW-0694">RNA-binding</keyword>
<keyword id="KW-0695">RNA-directed DNA polymerase</keyword>
<keyword id="KW-0808">Transferase</keyword>
<keyword id="KW-1179">Viral genome integration</keyword>
<keyword id="KW-0543">Viral nucleoprotein</keyword>
<keyword id="KW-1163">Viral penetration into host nucleus</keyword>
<keyword id="KW-1188">Viral release from host cell</keyword>
<keyword id="KW-0946">Virion</keyword>
<keyword id="KW-0917">Virion maturation</keyword>
<keyword id="KW-1160">Virus entry into host cell</keyword>
<keyword id="KW-0862">Zinc</keyword>
<keyword id="KW-0863">Zinc-finger</keyword>
<sequence>MGARASVLTGGKLDQWEKIYLRPGGKKKYMMKHLVWASRELERFACNPGLMDTAEGCAQLLRQLEPALKTGSEGLRSLFNTLAVLYCVHNNIKVQNTQEALEKLREKMKAEQKEPEPEQAAGAAAAPESSISRNYPLVQNAQGQMVHQPLSPRTLNAWVKVVEEKAFNPEVIPMFMALSEGATPQDLNTMLNTVGGHQAAMQMLKEVINEEAAEWDRGHPVHMGPIPPGQVREPRGSDIAGTTSTLAEQVAWMTANPPVPVGDIYRRWIVLGLNKIVRMYSPASILDIKQGPKETFRDYVDRFYKTLRAEQATQEVKNWMTETLLVQNANPDCKNILRALGPGASLEEMMTACQGVGGPAHKARVLAEAMTQAQTATSVFMQRGNFKGIRKTIKCFNCGKEGHLARNCKAPRKKGCWKCGQEGHQMKDCRSGERQFFREGLASLQREARKFPPDNNKERANSPSNRELWVSGGEDHTGDREGRKGEDRELSVPTLNFPQITLWQRPILTVKIGGEIKEALLDTGADDTVIEEIQLEGKWKPKMIGGIGGFIKVKQYDNVIIEIQGKKAVGTVLVGPTPVNIIGRNFLTQIGCTLNFPISPIETIPVKLKPGMDGPRVKQWPLTEEKIKALTEICTEMEKEGKISRIGPENPYNTPIFAIKKKDSTKWRKLVDFRELNKRTQDFWEVQLGIPHPAGLKKKKSVTVLDVGDAYFSCPLDENFRKYTAFTIPSVNNETPGIRYQYNVLPQGWKGSPAIFQSTMTKILEPFRKNNPELVIYQYMDDLYVGSDLEITQHREAVERLRSHLLTWGFTTPDKKHQKEPPFLWMGYELHPDKWTVQTIQLPEKDTWTVNDIQQLVGKLNWASQIYPGIKVKQLCKLIRGAKALTEVVTLTREAELELAENREILKEPVHGAYYNPDKELIAEIQKQGQGQWTYQIYQDLHKNLKTGKYAKMRSTHTNDIRQLTEVVQKVALESIVIWGKTPKFRLPVQKEVWETWWTEYWQATWIPDWEFVNTPPLVKLWYQLETEPISGAETYYVDGAANRETKLGKAGFVTDRGRQKVTSISETTNQQAELQAVLMALQDAGQEVNIVTDSQYVLGIIHSQPDKSESELVNQIIEELIKKERIYLSWVPAHKGIGGNEQIDKLVSTGIRKVLFLDGIDKAQEEHERYHSNWKAMASDFNLPPIVAKEIVASCDKCQLKGEAIHGQINCSPGVWQLDCTHLEGKIILVAVHVASGYLEAEVIPAETGQETAYFILKLAGRWPVKVIHTDNGSNFTSATVKAACWWANIQQEFGIPYNPQSQGAVESMNKELKKIIGQIRDQAEHLKTAVQMAVFIHNFKRKGGIGGYTAGERIIDIIATDIQTTKLQTQILKVQNFRVYYRDSREPTWKGPAKLLWKGEGAVVIQDNGDIKVVPRRKAKIIRDYGKQMAGDGCVASGQDESQDME</sequence>